<dbReference type="EMBL" id="AABR03031938">
    <property type="status" value="NOT_ANNOTATED_CDS"/>
    <property type="molecule type" value="Genomic_DNA"/>
</dbReference>
<dbReference type="RefSeq" id="NP_001101327.1">
    <property type="nucleotide sequence ID" value="NM_001107857.1"/>
</dbReference>
<dbReference type="SMR" id="P0C0K7"/>
<dbReference type="FunCoup" id="P0C0K7">
    <property type="interactions" value="307"/>
</dbReference>
<dbReference type="STRING" id="10116.ENSRNOP00000019720"/>
<dbReference type="GlyCosmos" id="P0C0K7">
    <property type="glycosylation" value="1 site, No reported glycans"/>
</dbReference>
<dbReference type="GlyGen" id="P0C0K7">
    <property type="glycosylation" value="1 site"/>
</dbReference>
<dbReference type="iPTMnet" id="P0C0K7"/>
<dbReference type="PhosphoSitePlus" id="P0C0K7"/>
<dbReference type="PaxDb" id="10116-ENSRNOP00000019720"/>
<dbReference type="Ensembl" id="ENSRNOT00000019720.6">
    <property type="protein sequence ID" value="ENSRNOP00000019720.4"/>
    <property type="gene ID" value="ENSRNOG00000014367.7"/>
</dbReference>
<dbReference type="GeneID" id="312275"/>
<dbReference type="KEGG" id="rno:312275"/>
<dbReference type="UCSC" id="RGD:1306163">
    <property type="organism name" value="rat"/>
</dbReference>
<dbReference type="AGR" id="RGD:1306163"/>
<dbReference type="CTD" id="2051"/>
<dbReference type="RGD" id="1306163">
    <property type="gene designation" value="Ephb6"/>
</dbReference>
<dbReference type="eggNOG" id="KOG0196">
    <property type="taxonomic scope" value="Eukaryota"/>
</dbReference>
<dbReference type="GeneTree" id="ENSGT00940000160399"/>
<dbReference type="HOGENOM" id="CLU_000288_141_4_1"/>
<dbReference type="InParanoid" id="P0C0K7"/>
<dbReference type="OMA" id="PQGPSCM"/>
<dbReference type="OrthoDB" id="9826029at2759"/>
<dbReference type="PhylomeDB" id="P0C0K7"/>
<dbReference type="TreeFam" id="TF314013"/>
<dbReference type="Reactome" id="R-RNO-2682334">
    <property type="pathway name" value="EPH-Ephrin signaling"/>
</dbReference>
<dbReference type="Reactome" id="R-RNO-3928662">
    <property type="pathway name" value="EPHB-mediated forward signaling"/>
</dbReference>
<dbReference type="Reactome" id="R-RNO-3928664">
    <property type="pathway name" value="Ephrin signaling"/>
</dbReference>
<dbReference type="Reactome" id="R-RNO-3928665">
    <property type="pathway name" value="EPH-ephrin mediated repulsion of cells"/>
</dbReference>
<dbReference type="PRO" id="PR:P0C0K7"/>
<dbReference type="Proteomes" id="UP000002494">
    <property type="component" value="Chromosome 4"/>
</dbReference>
<dbReference type="Bgee" id="ENSRNOG00000014367">
    <property type="expression patterns" value="Expressed in thymus and 19 other cell types or tissues"/>
</dbReference>
<dbReference type="GO" id="GO:0009986">
    <property type="term" value="C:cell surface"/>
    <property type="evidence" value="ECO:0000266"/>
    <property type="project" value="RGD"/>
</dbReference>
<dbReference type="GO" id="GO:0030425">
    <property type="term" value="C:dendrite"/>
    <property type="evidence" value="ECO:0000318"/>
    <property type="project" value="GO_Central"/>
</dbReference>
<dbReference type="GO" id="GO:0005886">
    <property type="term" value="C:plasma membrane"/>
    <property type="evidence" value="ECO:0000318"/>
    <property type="project" value="GO_Central"/>
</dbReference>
<dbReference type="GO" id="GO:0005524">
    <property type="term" value="F:ATP binding"/>
    <property type="evidence" value="ECO:0007669"/>
    <property type="project" value="UniProtKB-KW"/>
</dbReference>
<dbReference type="GO" id="GO:0005005">
    <property type="term" value="F:transmembrane-ephrin receptor activity"/>
    <property type="evidence" value="ECO:0000318"/>
    <property type="project" value="GO_Central"/>
</dbReference>
<dbReference type="GO" id="GO:0050798">
    <property type="term" value="P:activated T cell proliferation"/>
    <property type="evidence" value="ECO:0000266"/>
    <property type="project" value="RGD"/>
</dbReference>
<dbReference type="GO" id="GO:0007411">
    <property type="term" value="P:axon guidance"/>
    <property type="evidence" value="ECO:0000318"/>
    <property type="project" value="GO_Central"/>
</dbReference>
<dbReference type="GO" id="GO:0048013">
    <property type="term" value="P:ephrin receptor signaling pathway"/>
    <property type="evidence" value="ECO:0000318"/>
    <property type="project" value="GO_Central"/>
</dbReference>
<dbReference type="GO" id="GO:2000525">
    <property type="term" value="P:positive regulation of T cell costimulation"/>
    <property type="evidence" value="ECO:0000266"/>
    <property type="project" value="RGD"/>
</dbReference>
<dbReference type="GO" id="GO:0002456">
    <property type="term" value="P:T cell mediated immunity"/>
    <property type="evidence" value="ECO:0000266"/>
    <property type="project" value="RGD"/>
</dbReference>
<dbReference type="GO" id="GO:0001806">
    <property type="term" value="P:type IV hypersensitivity"/>
    <property type="evidence" value="ECO:0000266"/>
    <property type="project" value="RGD"/>
</dbReference>
<dbReference type="CDD" id="cd10475">
    <property type="entry name" value="EphR_LBD_B6"/>
    <property type="match status" value="1"/>
</dbReference>
<dbReference type="CDD" id="cd00063">
    <property type="entry name" value="FN3"/>
    <property type="match status" value="2"/>
</dbReference>
<dbReference type="CDD" id="cd09555">
    <property type="entry name" value="SAM_EPH-B6"/>
    <property type="match status" value="1"/>
</dbReference>
<dbReference type="CDD" id="cd00185">
    <property type="entry name" value="TNFRSF"/>
    <property type="match status" value="1"/>
</dbReference>
<dbReference type="FunFam" id="2.10.50.10:FF:000001">
    <property type="entry name" value="Ephrin type-A receptor 5"/>
    <property type="match status" value="1"/>
</dbReference>
<dbReference type="FunFam" id="2.60.40.10:FF:000059">
    <property type="entry name" value="Ephrin type-A receptor 6"/>
    <property type="match status" value="1"/>
</dbReference>
<dbReference type="FunFam" id="1.10.150.50:FF:000068">
    <property type="entry name" value="Ephrin type-B receptor 6"/>
    <property type="match status" value="1"/>
</dbReference>
<dbReference type="FunFam" id="1.10.510.10:FF:000470">
    <property type="entry name" value="Ephrin type-B receptor 6"/>
    <property type="match status" value="1"/>
</dbReference>
<dbReference type="FunFam" id="2.60.120.260:FF:000064">
    <property type="entry name" value="Ephrin type-B receptor 6"/>
    <property type="match status" value="1"/>
</dbReference>
<dbReference type="FunFam" id="3.30.200.20:FF:000143">
    <property type="entry name" value="Ephrin type-B receptor 6"/>
    <property type="match status" value="1"/>
</dbReference>
<dbReference type="FunFam" id="2.60.40.10:FF:000508">
    <property type="entry name" value="ephrin type-B receptor 6"/>
    <property type="match status" value="1"/>
</dbReference>
<dbReference type="FunFam" id="2.60.40.1770:FF:000004">
    <property type="entry name" value="ephrin type-B receptor 6"/>
    <property type="match status" value="1"/>
</dbReference>
<dbReference type="Gene3D" id="2.60.40.1770">
    <property type="entry name" value="ephrin a2 ectodomain"/>
    <property type="match status" value="1"/>
</dbReference>
<dbReference type="Gene3D" id="2.60.120.260">
    <property type="entry name" value="Galactose-binding domain-like"/>
    <property type="match status" value="1"/>
</dbReference>
<dbReference type="Gene3D" id="2.60.40.10">
    <property type="entry name" value="Immunoglobulins"/>
    <property type="match status" value="2"/>
</dbReference>
<dbReference type="Gene3D" id="3.30.200.20">
    <property type="entry name" value="Phosphorylase Kinase, domain 1"/>
    <property type="match status" value="1"/>
</dbReference>
<dbReference type="Gene3D" id="1.10.150.50">
    <property type="entry name" value="Transcription Factor, Ets-1"/>
    <property type="match status" value="1"/>
</dbReference>
<dbReference type="Gene3D" id="1.10.510.10">
    <property type="entry name" value="Transferase(Phosphotransferase) domain 1"/>
    <property type="match status" value="1"/>
</dbReference>
<dbReference type="Gene3D" id="2.10.50.10">
    <property type="entry name" value="Tumor Necrosis Factor Receptor, subunit A, domain 2"/>
    <property type="match status" value="1"/>
</dbReference>
<dbReference type="InterPro" id="IPR027936">
    <property type="entry name" value="Eph_TM"/>
</dbReference>
<dbReference type="InterPro" id="IPR001090">
    <property type="entry name" value="Ephrin_rcpt_lig-bd_dom"/>
</dbReference>
<dbReference type="InterPro" id="IPR050449">
    <property type="entry name" value="Ephrin_rcpt_TKs"/>
</dbReference>
<dbReference type="InterPro" id="IPR003961">
    <property type="entry name" value="FN3_dom"/>
</dbReference>
<dbReference type="InterPro" id="IPR036116">
    <property type="entry name" value="FN3_sf"/>
</dbReference>
<dbReference type="InterPro" id="IPR008979">
    <property type="entry name" value="Galactose-bd-like_sf"/>
</dbReference>
<dbReference type="InterPro" id="IPR013783">
    <property type="entry name" value="Ig-like_fold"/>
</dbReference>
<dbReference type="InterPro" id="IPR011009">
    <property type="entry name" value="Kinase-like_dom_sf"/>
</dbReference>
<dbReference type="InterPro" id="IPR000719">
    <property type="entry name" value="Prot_kinase_dom"/>
</dbReference>
<dbReference type="InterPro" id="IPR001660">
    <property type="entry name" value="SAM"/>
</dbReference>
<dbReference type="InterPro" id="IPR013761">
    <property type="entry name" value="SAM/pointed_sf"/>
</dbReference>
<dbReference type="InterPro" id="IPR001245">
    <property type="entry name" value="Ser-Thr/Tyr_kinase_cat_dom"/>
</dbReference>
<dbReference type="InterPro" id="IPR011641">
    <property type="entry name" value="Tyr-kin_ephrin_A/B_rcpt-like"/>
</dbReference>
<dbReference type="InterPro" id="IPR016257">
    <property type="entry name" value="Tyr_kinase_ephrin_rcpt"/>
</dbReference>
<dbReference type="InterPro" id="IPR001426">
    <property type="entry name" value="Tyr_kinase_rcpt_V_CS"/>
</dbReference>
<dbReference type="PANTHER" id="PTHR46877">
    <property type="entry name" value="EPH RECEPTOR A5"/>
    <property type="match status" value="1"/>
</dbReference>
<dbReference type="PANTHER" id="PTHR46877:SF15">
    <property type="entry name" value="EPHRIN TYPE-B RECEPTOR 6"/>
    <property type="match status" value="1"/>
</dbReference>
<dbReference type="Pfam" id="PF14575">
    <property type="entry name" value="EphA2_TM"/>
    <property type="match status" value="1"/>
</dbReference>
<dbReference type="Pfam" id="PF01404">
    <property type="entry name" value="Ephrin_lbd"/>
    <property type="match status" value="1"/>
</dbReference>
<dbReference type="Pfam" id="PF07699">
    <property type="entry name" value="Ephrin_rec_like"/>
    <property type="match status" value="1"/>
</dbReference>
<dbReference type="Pfam" id="PF00041">
    <property type="entry name" value="fn3"/>
    <property type="match status" value="1"/>
</dbReference>
<dbReference type="Pfam" id="PF07714">
    <property type="entry name" value="PK_Tyr_Ser-Thr"/>
    <property type="match status" value="1"/>
</dbReference>
<dbReference type="Pfam" id="PF07647">
    <property type="entry name" value="SAM_2"/>
    <property type="match status" value="1"/>
</dbReference>
<dbReference type="PIRSF" id="PIRSF000666">
    <property type="entry name" value="TyrPK_ephrin_receptor"/>
    <property type="match status" value="1"/>
</dbReference>
<dbReference type="PRINTS" id="PR00014">
    <property type="entry name" value="FNTYPEIII"/>
</dbReference>
<dbReference type="PRINTS" id="PR00109">
    <property type="entry name" value="TYRKINASE"/>
</dbReference>
<dbReference type="SMART" id="SM00615">
    <property type="entry name" value="EPH_lbd"/>
    <property type="match status" value="1"/>
</dbReference>
<dbReference type="SMART" id="SM01411">
    <property type="entry name" value="Ephrin_rec_like"/>
    <property type="match status" value="1"/>
</dbReference>
<dbReference type="SMART" id="SM00060">
    <property type="entry name" value="FN3"/>
    <property type="match status" value="2"/>
</dbReference>
<dbReference type="SMART" id="SM00454">
    <property type="entry name" value="SAM"/>
    <property type="match status" value="1"/>
</dbReference>
<dbReference type="SUPFAM" id="SSF49265">
    <property type="entry name" value="Fibronectin type III"/>
    <property type="match status" value="1"/>
</dbReference>
<dbReference type="SUPFAM" id="SSF49785">
    <property type="entry name" value="Galactose-binding domain-like"/>
    <property type="match status" value="1"/>
</dbReference>
<dbReference type="SUPFAM" id="SSF56112">
    <property type="entry name" value="Protein kinase-like (PK-like)"/>
    <property type="match status" value="1"/>
</dbReference>
<dbReference type="SUPFAM" id="SSF47769">
    <property type="entry name" value="SAM/Pointed domain"/>
    <property type="match status" value="1"/>
</dbReference>
<dbReference type="PROSITE" id="PS51550">
    <property type="entry name" value="EPH_LBD"/>
    <property type="match status" value="1"/>
</dbReference>
<dbReference type="PROSITE" id="PS50853">
    <property type="entry name" value="FN3"/>
    <property type="match status" value="2"/>
</dbReference>
<dbReference type="PROSITE" id="PS50011">
    <property type="entry name" value="PROTEIN_KINASE_DOM"/>
    <property type="match status" value="1"/>
</dbReference>
<dbReference type="PROSITE" id="PS00790">
    <property type="entry name" value="RECEPTOR_TYR_KIN_V_1"/>
    <property type="match status" value="1"/>
</dbReference>
<dbReference type="PROSITE" id="PS00791">
    <property type="entry name" value="RECEPTOR_TYR_KIN_V_2"/>
    <property type="match status" value="1"/>
</dbReference>
<dbReference type="PROSITE" id="PS50105">
    <property type="entry name" value="SAM_DOMAIN"/>
    <property type="match status" value="1"/>
</dbReference>
<evidence type="ECO:0000250" key="1"/>
<evidence type="ECO:0000255" key="2"/>
<evidence type="ECO:0000255" key="3">
    <source>
        <dbReference type="PROSITE-ProRule" id="PRU00159"/>
    </source>
</evidence>
<evidence type="ECO:0000255" key="4">
    <source>
        <dbReference type="PROSITE-ProRule" id="PRU00184"/>
    </source>
</evidence>
<evidence type="ECO:0000255" key="5">
    <source>
        <dbReference type="PROSITE-ProRule" id="PRU00316"/>
    </source>
</evidence>
<evidence type="ECO:0000255" key="6">
    <source>
        <dbReference type="PROSITE-ProRule" id="PRU00883"/>
    </source>
</evidence>
<organism>
    <name type="scientific">Rattus norvegicus</name>
    <name type="common">Rat</name>
    <dbReference type="NCBI Taxonomy" id="10116"/>
    <lineage>
        <taxon>Eukaryota</taxon>
        <taxon>Metazoa</taxon>
        <taxon>Chordata</taxon>
        <taxon>Craniata</taxon>
        <taxon>Vertebrata</taxon>
        <taxon>Euteleostomi</taxon>
        <taxon>Mammalia</taxon>
        <taxon>Eutheria</taxon>
        <taxon>Euarchontoglires</taxon>
        <taxon>Glires</taxon>
        <taxon>Rodentia</taxon>
        <taxon>Myomorpha</taxon>
        <taxon>Muroidea</taxon>
        <taxon>Muridae</taxon>
        <taxon>Murinae</taxon>
        <taxon>Rattus</taxon>
    </lineage>
</organism>
<feature type="signal peptide" evidence="1">
    <location>
        <begin position="1"/>
        <end position="31"/>
    </location>
</feature>
<feature type="chain" id="PRO_0000042113" description="Ephrin type-B receptor 6">
    <location>
        <begin position="32"/>
        <end position="1013"/>
    </location>
</feature>
<feature type="topological domain" description="Extracellular" evidence="2">
    <location>
        <begin position="32"/>
        <end position="590"/>
    </location>
</feature>
<feature type="transmembrane region" description="Helical" evidence="2">
    <location>
        <begin position="591"/>
        <end position="611"/>
    </location>
</feature>
<feature type="topological domain" description="Cytoplasmic" evidence="2">
    <location>
        <begin position="612"/>
        <end position="1013"/>
    </location>
</feature>
<feature type="domain" description="Eph LBD" evidence="6">
    <location>
        <begin position="33"/>
        <end position="231"/>
    </location>
</feature>
<feature type="domain" description="Fibronectin type-III 1" evidence="5">
    <location>
        <begin position="363"/>
        <end position="478"/>
    </location>
</feature>
<feature type="domain" description="Fibronectin type-III 2" evidence="5">
    <location>
        <begin position="479"/>
        <end position="574"/>
    </location>
</feature>
<feature type="domain" description="Protein kinase" evidence="3">
    <location>
        <begin position="662"/>
        <end position="911"/>
    </location>
</feature>
<feature type="domain" description="SAM" evidence="4">
    <location>
        <begin position="940"/>
        <end position="1004"/>
    </location>
</feature>
<feature type="short sequence motif" description="PDZ-binding" evidence="2">
    <location>
        <begin position="1011"/>
        <end position="1013"/>
    </location>
</feature>
<feature type="binding site" evidence="3">
    <location>
        <begin position="668"/>
        <end position="676"/>
    </location>
    <ligand>
        <name>ATP</name>
        <dbReference type="ChEBI" id="CHEBI:30616"/>
    </ligand>
</feature>
<feature type="glycosylation site" description="N-linked (GlcNAc...) asparagine" evidence="2">
    <location>
        <position position="472"/>
    </location>
</feature>
<comment type="function">
    <text evidence="1">Kinase-defective receptor for members of the ephrin-B family. Binds to ephrin-B1 and ephrin-B2. Modulates cell adhesion and migration by exerting both positive and negative effects upon stimulation with ephrin-B2. Inhibits JNK activation, T-cell receptor-induced IL-2 secretion and CD25 expression upon stimulation with ephrin-B2 (By similarity).</text>
</comment>
<comment type="subunit">
    <text evidence="1">Interacts with CBL and EPHB1. Interacts with FYN; this interaction takes place in a ligand-independent manner (By similarity).</text>
</comment>
<comment type="subcellular location">
    <subcellularLocation>
        <location evidence="1">Membrane</location>
        <topology evidence="1">Single-pass type I membrane protein</topology>
    </subcellularLocation>
</comment>
<comment type="domain">
    <text evidence="3">The protein kinase domain is predicted to be catalytically inactive. Its extracellular domain is capable of promoting cell adhesion and migration in response to low concentrations of ephrin-B2, but its cytoplasmic domain is essential for cell repulsion and inhibition of migration induced by high concentrations of ephrin-B2 (By similarity).</text>
</comment>
<comment type="PTM">
    <text evidence="1">Ligand-binding increases phosphorylation on tyrosine residues. Phosphorylation on tyrosine residues is mediated by transphosphorylation by the catalytically active EPHB1 in a ligand-independent manner. Tyrosine phosphorylation of the receptor may act as a switch on the functional transition from cell adhesion/attraction to de-adhesion/repulsion (By similarity).</text>
</comment>
<comment type="similarity">
    <text evidence="3">Belongs to the protein kinase superfamily. Tyr protein kinase family. Ephrin receptor subfamily.</text>
</comment>
<name>EPHB6_RAT</name>
<reference key="1">
    <citation type="journal article" date="2004" name="Nature">
        <title>Genome sequence of the Brown Norway rat yields insights into mammalian evolution.</title>
        <authorList>
            <person name="Gibbs R.A."/>
            <person name="Weinstock G.M."/>
            <person name="Metzker M.L."/>
            <person name="Muzny D.M."/>
            <person name="Sodergren E.J."/>
            <person name="Scherer S."/>
            <person name="Scott G."/>
            <person name="Steffen D."/>
            <person name="Worley K.C."/>
            <person name="Burch P.E."/>
            <person name="Okwuonu G."/>
            <person name="Hines S."/>
            <person name="Lewis L."/>
            <person name="Deramo C."/>
            <person name="Delgado O."/>
            <person name="Dugan-Rocha S."/>
            <person name="Miner G."/>
            <person name="Morgan M."/>
            <person name="Hawes A."/>
            <person name="Gill R."/>
            <person name="Holt R.A."/>
            <person name="Adams M.D."/>
            <person name="Amanatides P.G."/>
            <person name="Baden-Tillson H."/>
            <person name="Barnstead M."/>
            <person name="Chin S."/>
            <person name="Evans C.A."/>
            <person name="Ferriera S."/>
            <person name="Fosler C."/>
            <person name="Glodek A."/>
            <person name="Gu Z."/>
            <person name="Jennings D."/>
            <person name="Kraft C.L."/>
            <person name="Nguyen T."/>
            <person name="Pfannkoch C.M."/>
            <person name="Sitter C."/>
            <person name="Sutton G.G."/>
            <person name="Venter J.C."/>
            <person name="Woodage T."/>
            <person name="Smith D."/>
            <person name="Lee H.-M."/>
            <person name="Gustafson E."/>
            <person name="Cahill P."/>
            <person name="Kana A."/>
            <person name="Doucette-Stamm L."/>
            <person name="Weinstock K."/>
            <person name="Fechtel K."/>
            <person name="Weiss R.B."/>
            <person name="Dunn D.M."/>
            <person name="Green E.D."/>
            <person name="Blakesley R.W."/>
            <person name="Bouffard G.G."/>
            <person name="De Jong P.J."/>
            <person name="Osoegawa K."/>
            <person name="Zhu B."/>
            <person name="Marra M."/>
            <person name="Schein J."/>
            <person name="Bosdet I."/>
            <person name="Fjell C."/>
            <person name="Jones S."/>
            <person name="Krzywinski M."/>
            <person name="Mathewson C."/>
            <person name="Siddiqui A."/>
            <person name="Wye N."/>
            <person name="McPherson J."/>
            <person name="Zhao S."/>
            <person name="Fraser C.M."/>
            <person name="Shetty J."/>
            <person name="Shatsman S."/>
            <person name="Geer K."/>
            <person name="Chen Y."/>
            <person name="Abramzon S."/>
            <person name="Nierman W.C."/>
            <person name="Havlak P.H."/>
            <person name="Chen R."/>
            <person name="Durbin K.J."/>
            <person name="Egan A."/>
            <person name="Ren Y."/>
            <person name="Song X.-Z."/>
            <person name="Li B."/>
            <person name="Liu Y."/>
            <person name="Qin X."/>
            <person name="Cawley S."/>
            <person name="Cooney A.J."/>
            <person name="D'Souza L.M."/>
            <person name="Martin K."/>
            <person name="Wu J.Q."/>
            <person name="Gonzalez-Garay M.L."/>
            <person name="Jackson A.R."/>
            <person name="Kalafus K.J."/>
            <person name="McLeod M.P."/>
            <person name="Milosavljevic A."/>
            <person name="Virk D."/>
            <person name="Volkov A."/>
            <person name="Wheeler D.A."/>
            <person name="Zhang Z."/>
            <person name="Bailey J.A."/>
            <person name="Eichler E.E."/>
            <person name="Tuzun E."/>
            <person name="Birney E."/>
            <person name="Mongin E."/>
            <person name="Ureta-Vidal A."/>
            <person name="Woodwark C."/>
            <person name="Zdobnov E."/>
            <person name="Bork P."/>
            <person name="Suyama M."/>
            <person name="Torrents D."/>
            <person name="Alexandersson M."/>
            <person name="Trask B.J."/>
            <person name="Young J.M."/>
            <person name="Huang H."/>
            <person name="Wang H."/>
            <person name="Xing H."/>
            <person name="Daniels S."/>
            <person name="Gietzen D."/>
            <person name="Schmidt J."/>
            <person name="Stevens K."/>
            <person name="Vitt U."/>
            <person name="Wingrove J."/>
            <person name="Camara F."/>
            <person name="Mar Alba M."/>
            <person name="Abril J.F."/>
            <person name="Guigo R."/>
            <person name="Smit A."/>
            <person name="Dubchak I."/>
            <person name="Rubin E.M."/>
            <person name="Couronne O."/>
            <person name="Poliakov A."/>
            <person name="Huebner N."/>
            <person name="Ganten D."/>
            <person name="Goesele C."/>
            <person name="Hummel O."/>
            <person name="Kreitler T."/>
            <person name="Lee Y.-A."/>
            <person name="Monti J."/>
            <person name="Schulz H."/>
            <person name="Zimdahl H."/>
            <person name="Himmelbauer H."/>
            <person name="Lehrach H."/>
            <person name="Jacob H.J."/>
            <person name="Bromberg S."/>
            <person name="Gullings-Handley J."/>
            <person name="Jensen-Seaman M.I."/>
            <person name="Kwitek A.E."/>
            <person name="Lazar J."/>
            <person name="Pasko D."/>
            <person name="Tonellato P.J."/>
            <person name="Twigger S."/>
            <person name="Ponting C.P."/>
            <person name="Duarte J.M."/>
            <person name="Rice S."/>
            <person name="Goodstadt L."/>
            <person name="Beatson S.A."/>
            <person name="Emes R.D."/>
            <person name="Winter E.E."/>
            <person name="Webber C."/>
            <person name="Brandt P."/>
            <person name="Nyakatura G."/>
            <person name="Adetobi M."/>
            <person name="Chiaromonte F."/>
            <person name="Elnitski L."/>
            <person name="Eswara P."/>
            <person name="Hardison R.C."/>
            <person name="Hou M."/>
            <person name="Kolbe D."/>
            <person name="Makova K."/>
            <person name="Miller W."/>
            <person name="Nekrutenko A."/>
            <person name="Riemer C."/>
            <person name="Schwartz S."/>
            <person name="Taylor J."/>
            <person name="Yang S."/>
            <person name="Zhang Y."/>
            <person name="Lindpaintner K."/>
            <person name="Andrews T.D."/>
            <person name="Caccamo M."/>
            <person name="Clamp M."/>
            <person name="Clarke L."/>
            <person name="Curwen V."/>
            <person name="Durbin R.M."/>
            <person name="Eyras E."/>
            <person name="Searle S.M."/>
            <person name="Cooper G.M."/>
            <person name="Batzoglou S."/>
            <person name="Brudno M."/>
            <person name="Sidow A."/>
            <person name="Stone E.A."/>
            <person name="Payseur B.A."/>
            <person name="Bourque G."/>
            <person name="Lopez-Otin C."/>
            <person name="Puente X.S."/>
            <person name="Chakrabarti K."/>
            <person name="Chatterji S."/>
            <person name="Dewey C."/>
            <person name="Pachter L."/>
            <person name="Bray N."/>
            <person name="Yap V.B."/>
            <person name="Caspi A."/>
            <person name="Tesler G."/>
            <person name="Pevzner P.A."/>
            <person name="Haussler D."/>
            <person name="Roskin K.M."/>
            <person name="Baertsch R."/>
            <person name="Clawson H."/>
            <person name="Furey T.S."/>
            <person name="Hinrichs A.S."/>
            <person name="Karolchik D."/>
            <person name="Kent W.J."/>
            <person name="Rosenbloom K.R."/>
            <person name="Trumbower H."/>
            <person name="Weirauch M."/>
            <person name="Cooper D.N."/>
            <person name="Stenson P.D."/>
            <person name="Ma B."/>
            <person name="Brent M."/>
            <person name="Arumugam M."/>
            <person name="Shteynberg D."/>
            <person name="Copley R.R."/>
            <person name="Taylor M.S."/>
            <person name="Riethman H."/>
            <person name="Mudunuri U."/>
            <person name="Peterson J."/>
            <person name="Guyer M."/>
            <person name="Felsenfeld A."/>
            <person name="Old S."/>
            <person name="Mockrin S."/>
            <person name="Collins F.S."/>
        </authorList>
    </citation>
    <scope>NUCLEOTIDE SEQUENCE [LARGE SCALE GENOMIC DNA]</scope>
    <source>
        <strain>Brown Norway</strain>
    </source>
</reference>
<sequence>MASENTAGSGSRVAGMVYSLWLLVLGPSVLALEEVLLDTTGETSEIGWLTYPPGGWDEVSVLDDQRRLTRTFEACHVAGLPPGSGQDNWLQTHFVERRGAQRAHIRLHFSVRACSSLGVSGGTCRETFTLYYRQADEPDSPDSISAWHLKRWTKVDTIAADESFPASSSSSSWAVGPHRTDQRVGLQLNVKERSFGPLTQRGFYVAFQDTGACLALVAVKLFSYTCPSVLRAFASFPETQASGAGGASLVAAVGTCVAHAEPEEDGVGGQAGGSPPRLHCNGEGRWMVAVGGCRCQPGHQPARGDKLCQACPEGSYKALPGNVPCSPCPARSHSPDPAAPVCPCLQGFYRASSDPPEAPCTGPPSAPRELWFEVQGSALMLHWRLPQELGGRGDLLFNVVCKECGGHKEPSSGGMCRRCRDEVHFDPRQRGLTESRVLVGGLRAHVPYILEVQAVNGVSELSPDPPQAAAINVSTSHEVPSAVPVMHQVSRAANSITVSWPQPEQTNGNILDYQLRYYDQAEDESHSFTMTSETNTATVTRLSPGHIYGFQVRARTAAGHGPYGGKVYFQTLPQGELSSQLPEKLSLVIGSILGALAFLLLAAITVLAVIFQRKRRGTGYTEQLQQYSSPGLGVKYYIDPSTYDDPCQAIRELAREVDPTYIKIEEVIGAGSFGEVRRGRLQPRGRREQAVAIQALWAGGAESLKMTFLGRAALLGQFQHPNILRLEGVVTRSRPVMVLTELMELGPLDSFLRQREGQFSSLQLVAMQRGVAAAMQYLSSFAFVHRALSARSVLVNSHLVCKVARLGHSPQGSSSLLRWAAPEVITHGKYTTSSDVWSFGILMWEVMSYGERPYWDMSDQEVLNAIEQEFRLPPPPGCPTGLHLLMLDTWQKDRARRPHFDQLVAAFDKMIRKPDTLQAEGSSGDRPSQALLNPVALDFPCLDSPQAWLSAIGLECYQDNFSKFGLSTFSDVAQLSLEDLPGLGITLAGHQKKLLHNIQLLQQHLRQPGSVEV</sequence>
<protein>
    <recommendedName>
        <fullName>Ephrin type-B receptor 6</fullName>
    </recommendedName>
    <alternativeName>
        <fullName>Tyrosine-protein kinase-defective receptor EPH-6</fullName>
    </alternativeName>
</protein>
<proteinExistence type="inferred from homology"/>
<keyword id="KW-0067">ATP-binding</keyword>
<keyword id="KW-0325">Glycoprotein</keyword>
<keyword id="KW-0472">Membrane</keyword>
<keyword id="KW-0547">Nucleotide-binding</keyword>
<keyword id="KW-0675">Receptor</keyword>
<keyword id="KW-1185">Reference proteome</keyword>
<keyword id="KW-0677">Repeat</keyword>
<keyword id="KW-0732">Signal</keyword>
<keyword id="KW-0812">Transmembrane</keyword>
<keyword id="KW-1133">Transmembrane helix</keyword>
<gene>
    <name type="primary">Ephb6</name>
</gene>
<accession>P0C0K7</accession>